<gene>
    <name type="primary">Bicd1</name>
</gene>
<reference key="1">
    <citation type="journal article" date="2005" name="Science">
        <title>The transcriptional landscape of the mammalian genome.</title>
        <authorList>
            <person name="Carninci P."/>
            <person name="Kasukawa T."/>
            <person name="Katayama S."/>
            <person name="Gough J."/>
            <person name="Frith M.C."/>
            <person name="Maeda N."/>
            <person name="Oyama R."/>
            <person name="Ravasi T."/>
            <person name="Lenhard B."/>
            <person name="Wells C."/>
            <person name="Kodzius R."/>
            <person name="Shimokawa K."/>
            <person name="Bajic V.B."/>
            <person name="Brenner S.E."/>
            <person name="Batalov S."/>
            <person name="Forrest A.R."/>
            <person name="Zavolan M."/>
            <person name="Davis M.J."/>
            <person name="Wilming L.G."/>
            <person name="Aidinis V."/>
            <person name="Allen J.E."/>
            <person name="Ambesi-Impiombato A."/>
            <person name="Apweiler R."/>
            <person name="Aturaliya R.N."/>
            <person name="Bailey T.L."/>
            <person name="Bansal M."/>
            <person name="Baxter L."/>
            <person name="Beisel K.W."/>
            <person name="Bersano T."/>
            <person name="Bono H."/>
            <person name="Chalk A.M."/>
            <person name="Chiu K.P."/>
            <person name="Choudhary V."/>
            <person name="Christoffels A."/>
            <person name="Clutterbuck D.R."/>
            <person name="Crowe M.L."/>
            <person name="Dalla E."/>
            <person name="Dalrymple B.P."/>
            <person name="de Bono B."/>
            <person name="Della Gatta G."/>
            <person name="di Bernardo D."/>
            <person name="Down T."/>
            <person name="Engstrom P."/>
            <person name="Fagiolini M."/>
            <person name="Faulkner G."/>
            <person name="Fletcher C.F."/>
            <person name="Fukushima T."/>
            <person name="Furuno M."/>
            <person name="Futaki S."/>
            <person name="Gariboldi M."/>
            <person name="Georgii-Hemming P."/>
            <person name="Gingeras T.R."/>
            <person name="Gojobori T."/>
            <person name="Green R.E."/>
            <person name="Gustincich S."/>
            <person name="Harbers M."/>
            <person name="Hayashi Y."/>
            <person name="Hensch T.K."/>
            <person name="Hirokawa N."/>
            <person name="Hill D."/>
            <person name="Huminiecki L."/>
            <person name="Iacono M."/>
            <person name="Ikeo K."/>
            <person name="Iwama A."/>
            <person name="Ishikawa T."/>
            <person name="Jakt M."/>
            <person name="Kanapin A."/>
            <person name="Katoh M."/>
            <person name="Kawasawa Y."/>
            <person name="Kelso J."/>
            <person name="Kitamura H."/>
            <person name="Kitano H."/>
            <person name="Kollias G."/>
            <person name="Krishnan S.P."/>
            <person name="Kruger A."/>
            <person name="Kummerfeld S.K."/>
            <person name="Kurochkin I.V."/>
            <person name="Lareau L.F."/>
            <person name="Lazarevic D."/>
            <person name="Lipovich L."/>
            <person name="Liu J."/>
            <person name="Liuni S."/>
            <person name="McWilliam S."/>
            <person name="Madan Babu M."/>
            <person name="Madera M."/>
            <person name="Marchionni L."/>
            <person name="Matsuda H."/>
            <person name="Matsuzawa S."/>
            <person name="Miki H."/>
            <person name="Mignone F."/>
            <person name="Miyake S."/>
            <person name="Morris K."/>
            <person name="Mottagui-Tabar S."/>
            <person name="Mulder N."/>
            <person name="Nakano N."/>
            <person name="Nakauchi H."/>
            <person name="Ng P."/>
            <person name="Nilsson R."/>
            <person name="Nishiguchi S."/>
            <person name="Nishikawa S."/>
            <person name="Nori F."/>
            <person name="Ohara O."/>
            <person name="Okazaki Y."/>
            <person name="Orlando V."/>
            <person name="Pang K.C."/>
            <person name="Pavan W.J."/>
            <person name="Pavesi G."/>
            <person name="Pesole G."/>
            <person name="Petrovsky N."/>
            <person name="Piazza S."/>
            <person name="Reed J."/>
            <person name="Reid J.F."/>
            <person name="Ring B.Z."/>
            <person name="Ringwald M."/>
            <person name="Rost B."/>
            <person name="Ruan Y."/>
            <person name="Salzberg S.L."/>
            <person name="Sandelin A."/>
            <person name="Schneider C."/>
            <person name="Schoenbach C."/>
            <person name="Sekiguchi K."/>
            <person name="Semple C.A."/>
            <person name="Seno S."/>
            <person name="Sessa L."/>
            <person name="Sheng Y."/>
            <person name="Shibata Y."/>
            <person name="Shimada H."/>
            <person name="Shimada K."/>
            <person name="Silva D."/>
            <person name="Sinclair B."/>
            <person name="Sperling S."/>
            <person name="Stupka E."/>
            <person name="Sugiura K."/>
            <person name="Sultana R."/>
            <person name="Takenaka Y."/>
            <person name="Taki K."/>
            <person name="Tammoja K."/>
            <person name="Tan S.L."/>
            <person name="Tang S."/>
            <person name="Taylor M.S."/>
            <person name="Tegner J."/>
            <person name="Teichmann S.A."/>
            <person name="Ueda H.R."/>
            <person name="van Nimwegen E."/>
            <person name="Verardo R."/>
            <person name="Wei C.L."/>
            <person name="Yagi K."/>
            <person name="Yamanishi H."/>
            <person name="Zabarovsky E."/>
            <person name="Zhu S."/>
            <person name="Zimmer A."/>
            <person name="Hide W."/>
            <person name="Bult C."/>
            <person name="Grimmond S.M."/>
            <person name="Teasdale R.D."/>
            <person name="Liu E.T."/>
            <person name="Brusic V."/>
            <person name="Quackenbush J."/>
            <person name="Wahlestedt C."/>
            <person name="Mattick J.S."/>
            <person name="Hume D.A."/>
            <person name="Kai C."/>
            <person name="Sasaki D."/>
            <person name="Tomaru Y."/>
            <person name="Fukuda S."/>
            <person name="Kanamori-Katayama M."/>
            <person name="Suzuki M."/>
            <person name="Aoki J."/>
            <person name="Arakawa T."/>
            <person name="Iida J."/>
            <person name="Imamura K."/>
            <person name="Itoh M."/>
            <person name="Kato T."/>
            <person name="Kawaji H."/>
            <person name="Kawagashira N."/>
            <person name="Kawashima T."/>
            <person name="Kojima M."/>
            <person name="Kondo S."/>
            <person name="Konno H."/>
            <person name="Nakano K."/>
            <person name="Ninomiya N."/>
            <person name="Nishio T."/>
            <person name="Okada M."/>
            <person name="Plessy C."/>
            <person name="Shibata K."/>
            <person name="Shiraki T."/>
            <person name="Suzuki S."/>
            <person name="Tagami M."/>
            <person name="Waki K."/>
            <person name="Watahiki A."/>
            <person name="Okamura-Oho Y."/>
            <person name="Suzuki H."/>
            <person name="Kawai J."/>
            <person name="Hayashizaki Y."/>
        </authorList>
    </citation>
    <scope>NUCLEOTIDE SEQUENCE [LARGE SCALE MRNA] (ISOFORMS 1 AND 2)</scope>
    <source>
        <strain>C57BL/6J</strain>
        <tissue>Brain</tissue>
        <tissue>Brain cortex</tissue>
        <tissue>Cerebellum</tissue>
        <tissue>Hypothalamus</tissue>
        <tissue>Spinal ganglion</tissue>
    </source>
</reference>
<reference key="2">
    <citation type="journal article" date="2004" name="Genome Res.">
        <title>The status, quality, and expansion of the NIH full-length cDNA project: the Mammalian Gene Collection (MGC).</title>
        <authorList>
            <consortium name="The MGC Project Team"/>
        </authorList>
    </citation>
    <scope>NUCLEOTIDE SEQUENCE [LARGE SCALE MRNA] (ISOFORM 1)</scope>
    <source>
        <tissue>Mammary tumor</tissue>
    </source>
</reference>
<reference key="3">
    <citation type="journal article" date="1997" name="Genomics">
        <title>A human homologue (BICD1) of the Drosophila bicaudal-D gene.</title>
        <authorList>
            <person name="Baens M."/>
            <person name="Marynen P."/>
        </authorList>
    </citation>
    <scope>NUCLEOTIDE SEQUENCE [MRNA] OF 231-775 (ISOFORM 1)</scope>
</reference>
<reference key="4">
    <citation type="submission" date="2000-03" db="EMBL/GenBank/DDBJ databases">
        <title>Mammalian BicD is a Golgi-associated protein that transiently interacts with the neuronal proteins CLIP-115 and KIFC2.</title>
        <authorList>
            <person name="Hoogenraad C.C."/>
            <person name="Akhmanova A."/>
            <person name="Galjart N."/>
        </authorList>
    </citation>
    <scope>PARTIAL NUCLEOTIDE SEQUENCE [MRNA] (ISOFORMS 1; 3 AND 4)</scope>
    <scope>INTERACTION WITH CLIP-115 AND KIFC2</scope>
    <scope>SUBCELLULAR LOCATION</scope>
</reference>
<dbReference type="EMBL" id="AK038585">
    <property type="protein sequence ID" value="BAC30057.1"/>
    <property type="molecule type" value="mRNA"/>
</dbReference>
<dbReference type="EMBL" id="AK043650">
    <property type="protein sequence ID" value="BAC31607.1"/>
    <property type="molecule type" value="mRNA"/>
</dbReference>
<dbReference type="EMBL" id="AK045975">
    <property type="protein sequence ID" value="BAC32557.1"/>
    <property type="molecule type" value="mRNA"/>
</dbReference>
<dbReference type="EMBL" id="AK051718">
    <property type="protein sequence ID" value="BAC34733.1"/>
    <property type="molecule type" value="mRNA"/>
</dbReference>
<dbReference type="EMBL" id="AK082523">
    <property type="protein sequence ID" value="BAC38518.1"/>
    <property type="molecule type" value="mRNA"/>
</dbReference>
<dbReference type="EMBL" id="BC016192">
    <property type="protein sequence ID" value="AAH16192.1"/>
    <property type="molecule type" value="mRNA"/>
</dbReference>
<dbReference type="EMBL" id="U90029">
    <property type="protein sequence ID" value="AAB94807.1"/>
    <property type="molecule type" value="mRNA"/>
</dbReference>
<dbReference type="EMBL" id="AJ288054">
    <property type="protein sequence ID" value="CAC81709.1"/>
    <property type="molecule type" value="mRNA"/>
</dbReference>
<dbReference type="EMBL" id="AJ288055">
    <property type="protein sequence ID" value="CAC81710.1"/>
    <property type="molecule type" value="mRNA"/>
</dbReference>
<dbReference type="EMBL" id="AJ288056">
    <property type="protein sequence ID" value="CAC81711.1"/>
    <property type="molecule type" value="mRNA"/>
</dbReference>
<dbReference type="CCDS" id="CCDS39723.1">
    <molecule id="Q8BR07-1"/>
</dbReference>
<dbReference type="CCDS" id="CCDS51962.1">
    <molecule id="Q8BR07-3"/>
</dbReference>
<dbReference type="RefSeq" id="NP_001106267.1">
    <molecule id="Q8BR07-3"/>
    <property type="nucleotide sequence ID" value="NM_001112796.2"/>
</dbReference>
<dbReference type="RefSeq" id="NP_033883.2">
    <molecule id="Q8BR07-1"/>
    <property type="nucleotide sequence ID" value="NM_009753.4"/>
</dbReference>
<dbReference type="PDB" id="4YTD">
    <property type="method" value="X-ray"/>
    <property type="resolution" value="1.50 A"/>
    <property type="chains" value="A/B=711-808"/>
</dbReference>
<dbReference type="PDBsum" id="4YTD"/>
<dbReference type="SMR" id="Q8BR07"/>
<dbReference type="BioGRID" id="198348">
    <property type="interactions" value="23"/>
</dbReference>
<dbReference type="FunCoup" id="Q8BR07">
    <property type="interactions" value="2990"/>
</dbReference>
<dbReference type="IntAct" id="Q8BR07">
    <property type="interactions" value="129"/>
</dbReference>
<dbReference type="MINT" id="Q8BR07"/>
<dbReference type="STRING" id="10090.ENSMUSP00000084039"/>
<dbReference type="iPTMnet" id="Q8BR07"/>
<dbReference type="PhosphoSitePlus" id="Q8BR07"/>
<dbReference type="PaxDb" id="10090-ENSMUSP00000084039"/>
<dbReference type="ProteomicsDB" id="273684">
    <molecule id="Q8BR07-1"/>
</dbReference>
<dbReference type="ProteomicsDB" id="273685">
    <molecule id="Q8BR07-2"/>
</dbReference>
<dbReference type="ProteomicsDB" id="273686">
    <molecule id="Q8BR07-3"/>
</dbReference>
<dbReference type="ProteomicsDB" id="273687">
    <molecule id="Q8BR07-4"/>
</dbReference>
<dbReference type="Antibodypedia" id="24706">
    <property type="antibodies" value="67 antibodies from 23 providers"/>
</dbReference>
<dbReference type="DNASU" id="12121"/>
<dbReference type="Ensembl" id="ENSMUST00000086829.11">
    <molecule id="Q8BR07-1"/>
    <property type="protein sequence ID" value="ENSMUSP00000084039.5"/>
    <property type="gene ID" value="ENSMUSG00000003452.16"/>
</dbReference>
<dbReference type="Ensembl" id="ENSMUST00000111513.9">
    <molecule id="Q8BR07-3"/>
    <property type="protein sequence ID" value="ENSMUSP00000107138.3"/>
    <property type="gene ID" value="ENSMUSG00000003452.16"/>
</dbReference>
<dbReference type="GeneID" id="12121"/>
<dbReference type="KEGG" id="mmu:12121"/>
<dbReference type="UCSC" id="uc009eug.3">
    <molecule id="Q8BR07-2"/>
    <property type="organism name" value="mouse"/>
</dbReference>
<dbReference type="UCSC" id="uc009euh.3">
    <molecule id="Q8BR07-1"/>
    <property type="organism name" value="mouse"/>
</dbReference>
<dbReference type="UCSC" id="uc009eui.3">
    <molecule id="Q8BR07-3"/>
    <property type="organism name" value="mouse"/>
</dbReference>
<dbReference type="AGR" id="MGI:1101760"/>
<dbReference type="CTD" id="636"/>
<dbReference type="MGI" id="MGI:1101760">
    <property type="gene designation" value="Bicd1"/>
</dbReference>
<dbReference type="VEuPathDB" id="HostDB:ENSMUSG00000003452"/>
<dbReference type="eggNOG" id="KOG0999">
    <property type="taxonomic scope" value="Eukaryota"/>
</dbReference>
<dbReference type="GeneTree" id="ENSGT00940000154471"/>
<dbReference type="HOGENOM" id="CLU_014107_1_0_1"/>
<dbReference type="InParanoid" id="Q8BR07"/>
<dbReference type="OrthoDB" id="10069295at2759"/>
<dbReference type="TreeFam" id="TF323833"/>
<dbReference type="Reactome" id="R-MMU-6811436">
    <property type="pathway name" value="COPI-independent Golgi-to-ER retrograde traffic"/>
</dbReference>
<dbReference type="BioGRID-ORCS" id="12121">
    <property type="hits" value="1 hit in 62 CRISPR screens"/>
</dbReference>
<dbReference type="ChiTaRS" id="Bicd1">
    <property type="organism name" value="mouse"/>
</dbReference>
<dbReference type="EvolutionaryTrace" id="Q8BR07"/>
<dbReference type="PRO" id="PR:Q8BR07"/>
<dbReference type="Proteomes" id="UP000000589">
    <property type="component" value="Chromosome 6"/>
</dbReference>
<dbReference type="RNAct" id="Q8BR07">
    <property type="molecule type" value="protein"/>
</dbReference>
<dbReference type="Bgee" id="ENSMUSG00000003452">
    <property type="expression patterns" value="Expressed in sciatic nerve and 206 other cell types or tissues"/>
</dbReference>
<dbReference type="ExpressionAtlas" id="Q8BR07">
    <property type="expression patterns" value="baseline and differential"/>
</dbReference>
<dbReference type="GO" id="GO:0005794">
    <property type="term" value="C:Golgi apparatus"/>
    <property type="evidence" value="ECO:0007669"/>
    <property type="project" value="UniProtKB-SubCell"/>
</dbReference>
<dbReference type="GO" id="GO:0008093">
    <property type="term" value="F:cytoskeletal anchor activity"/>
    <property type="evidence" value="ECO:0007669"/>
    <property type="project" value="InterPro"/>
</dbReference>
<dbReference type="GO" id="GO:0070840">
    <property type="term" value="F:dynein complex binding"/>
    <property type="evidence" value="ECO:0007669"/>
    <property type="project" value="InterPro"/>
</dbReference>
<dbReference type="GO" id="GO:0031871">
    <property type="term" value="F:proteinase activated receptor binding"/>
    <property type="evidence" value="ECO:0000353"/>
    <property type="project" value="BHF-UCL"/>
</dbReference>
<dbReference type="GO" id="GO:0072393">
    <property type="term" value="P:microtubule anchoring at microtubule organizing center"/>
    <property type="evidence" value="ECO:0000315"/>
    <property type="project" value="BHF-UCL"/>
</dbReference>
<dbReference type="GO" id="GO:1900737">
    <property type="term" value="P:negative regulation of phospholipase C-activating G protein-coupled receptor signaling pathway"/>
    <property type="evidence" value="ECO:0000314"/>
    <property type="project" value="BHF-UCL"/>
</dbReference>
<dbReference type="GO" id="GO:0034063">
    <property type="term" value="P:stress granule assembly"/>
    <property type="evidence" value="ECO:0000315"/>
    <property type="project" value="BHF-UCL"/>
</dbReference>
<dbReference type="Gene3D" id="6.10.250.2470">
    <property type="match status" value="1"/>
</dbReference>
<dbReference type="InterPro" id="IPR018477">
    <property type="entry name" value="BICD"/>
</dbReference>
<dbReference type="PANTHER" id="PTHR31233">
    <property type="entry name" value="BICAUDAL D FAMILY MEMBER"/>
    <property type="match status" value="1"/>
</dbReference>
<dbReference type="PANTHER" id="PTHR31233:SF3">
    <property type="entry name" value="PROTEIN BICAUDAL D HOMOLOG 1"/>
    <property type="match status" value="1"/>
</dbReference>
<dbReference type="Pfam" id="PF09730">
    <property type="entry name" value="BicD"/>
    <property type="match status" value="1"/>
</dbReference>
<comment type="function">
    <text evidence="1">Regulates coat complex coatomer protein I (COPI)-independent Golgi-endoplasmic reticulum transport by recruiting the dynein-dynactin motor complex.</text>
</comment>
<comment type="subunit">
    <text evidence="1 4">Interacts with RAB6A. Interacts (via C-terminus) with RAB6B (GTP-bound); the interaction is direct (By similarity). Interacts with CLIP-115 and KIFC2.</text>
</comment>
<comment type="interaction">
    <interactant intactId="EBI-11569902">
        <id>Q8BR07</id>
    </interactant>
    <interactant intactId="EBI-4284816">
        <id>Q6PB44</id>
        <label>Ptpn23</label>
    </interactant>
    <organismsDiffer>false</organismsDiffer>
    <experiments>7</experiments>
</comment>
<comment type="subcellular location">
    <subcellularLocation>
        <location evidence="4">Golgi apparatus</location>
    </subcellularLocation>
</comment>
<comment type="alternative products">
    <event type="alternative splicing"/>
    <isoform>
        <id>Q8BR07-1</id>
        <name>1</name>
        <sequence type="displayed"/>
    </isoform>
    <isoform>
        <id>Q8BR07-2</id>
        <name>2</name>
        <sequence type="described" ref="VSP_007965 VSP_007966"/>
    </isoform>
    <isoform>
        <id>Q8BR07-3</id>
        <name>3</name>
        <sequence type="described" ref="VSP_007967"/>
    </isoform>
    <isoform>
        <id>Q8BR07-4</id>
        <name>4</name>
        <sequence type="described" ref="VSP_007968"/>
    </isoform>
</comment>
<comment type="tissue specificity">
    <text>Expressed in the brain, heart and skeletal muscle.</text>
</comment>
<comment type="developmental stage">
    <text>Expressed during embryonic development.</text>
</comment>
<comment type="miscellaneous">
    <molecule>Isoform 2</molecule>
    <text evidence="6">Due to intron retention.</text>
</comment>
<comment type="miscellaneous">
    <molecule>Isoform 4</molecule>
    <text evidence="6">Due to intron retention.</text>
</comment>
<comment type="similarity">
    <text evidence="6">Belongs to the BicD family.</text>
</comment>
<name>BICD1_MOUSE</name>
<sequence length="835" mass="95896">MAAEEALKTVDQYKTEIERLTKELTETTHEKIQAAEYGLVVLEEKLTLKQQYDELEAEYDGLKQELEQLREAFGQSFSIHRKVAEDGETREETLLQESASKEAYYLNKILEMQNELKQSRAVVTNVQAENERLSAVVQELKENNEMVELQRIRMKDEIREYKFREARLLQDYTELEEENITLQKLVSTLKQNQVEYEGLKHEIKRFEEETVLLNSQLEDAIRLKEIAEHQLEEALETLKNEREQKNNLRKELSQYINLSDSHISISVDGLKFAEDGSEPNNDDKMNGHIHGPLGKLNGDYRTPTTRKGESLHPVSDLFSELNISEIQKLKQQLIQVEREKAILLANLQESQTQLEHTKGALTEQHERVHRLTEHVNAMRGLQNSKEIKAELDCEKGRNSAEEAHDYEVDINGLEILECKYRVAVTEVIDLKAEIKALKEKYNKSVENYTEEKTKYESKIQMYDEQVTNLEKTSKESGEKMAHMEKELQKMTGIANENHNTLNTAQDELVTFSEELAQLYHHVCLCNNETPNRVMLDYYRQSRVTRSGSLKGPDDPRGLLSPRLSRRGVSSPVESRTSSEPVSKENTETSKEPSPTKTPTISPVITAPPSSPVLDTSDIRKEPMNIYNLNAIIRDQIKHLQKAVDRSLQLSRQRAAARELAPMIDKDKEALMEEILKLKSLLSTKREQIATLRAVLKANKQTAEVALANLKNKYENEKAMVTETMTKLRNELKALKEDAATFSSLRAMFATRCDEYVTQLDEMQRQLAAAEDEKKTLNTLLRMAIQQKLALTQRLEDLEFDHEQSRRSKGKLGKSKIGSPKIVSSLLPPYRHSAHN</sequence>
<accession>Q8BR07</accession>
<accession>O55206</accession>
<accession>Q8BQ18</accession>
<accession>Q8BRR8</accession>
<accession>Q8C4D3</accession>
<accession>Q8CAK6</accession>
<accession>Q8R2J4</accession>
<accession>Q8R2J5</accession>
<accession>Q8R2J6</accession>
<accession>Q91YP7</accession>
<organism>
    <name type="scientific">Mus musculus</name>
    <name type="common">Mouse</name>
    <dbReference type="NCBI Taxonomy" id="10090"/>
    <lineage>
        <taxon>Eukaryota</taxon>
        <taxon>Metazoa</taxon>
        <taxon>Chordata</taxon>
        <taxon>Craniata</taxon>
        <taxon>Vertebrata</taxon>
        <taxon>Euteleostomi</taxon>
        <taxon>Mammalia</taxon>
        <taxon>Eutheria</taxon>
        <taxon>Euarchontoglires</taxon>
        <taxon>Glires</taxon>
        <taxon>Rodentia</taxon>
        <taxon>Myomorpha</taxon>
        <taxon>Muroidea</taxon>
        <taxon>Muridae</taxon>
        <taxon>Murinae</taxon>
        <taxon>Mus</taxon>
        <taxon>Mus</taxon>
    </lineage>
</organism>
<protein>
    <recommendedName>
        <fullName>Protein bicaudal D homolog 1</fullName>
        <shortName>Bic-D 1</shortName>
    </recommendedName>
</protein>
<evidence type="ECO:0000250" key="1"/>
<evidence type="ECO:0000255" key="2"/>
<evidence type="ECO:0000256" key="3">
    <source>
        <dbReference type="SAM" id="MobiDB-lite"/>
    </source>
</evidence>
<evidence type="ECO:0000269" key="4">
    <source ref="4"/>
</evidence>
<evidence type="ECO:0000303" key="5">
    <source>
    </source>
</evidence>
<evidence type="ECO:0000305" key="6"/>
<evidence type="ECO:0007829" key="7">
    <source>
        <dbReference type="PDB" id="4YTD"/>
    </source>
</evidence>
<feature type="chain" id="PRO_0000205358" description="Protein bicaudal D homolog 1">
    <location>
        <begin position="1"/>
        <end position="835"/>
    </location>
</feature>
<feature type="region of interest" description="Disordered" evidence="3">
    <location>
        <begin position="278"/>
        <end position="297"/>
    </location>
</feature>
<feature type="region of interest" description="Disordered" evidence="3">
    <location>
        <begin position="545"/>
        <end position="616"/>
    </location>
</feature>
<feature type="region of interest" description="Interaction with RAB6A" evidence="1">
    <location>
        <begin position="663"/>
        <end position="803"/>
    </location>
</feature>
<feature type="region of interest" description="Disordered" evidence="3">
    <location>
        <begin position="800"/>
        <end position="835"/>
    </location>
</feature>
<feature type="coiled-coil region" evidence="2">
    <location>
        <begin position="1"/>
        <end position="264"/>
    </location>
</feature>
<feature type="coiled-coil region" evidence="2">
    <location>
        <begin position="320"/>
        <end position="519"/>
    </location>
</feature>
<feature type="coiled-coil region" evidence="2">
    <location>
        <begin position="663"/>
        <end position="803"/>
    </location>
</feature>
<feature type="compositionally biased region" description="Low complexity" evidence="3">
    <location>
        <begin position="557"/>
        <end position="572"/>
    </location>
</feature>
<feature type="compositionally biased region" description="Basic and acidic residues" evidence="3">
    <location>
        <begin position="581"/>
        <end position="590"/>
    </location>
</feature>
<feature type="compositionally biased region" description="Low complexity" evidence="3">
    <location>
        <begin position="591"/>
        <end position="604"/>
    </location>
</feature>
<feature type="splice variant" id="VSP_007965" description="In isoform 2." evidence="5">
    <original>EYEGLKHEIKRFEEET</original>
    <variation>RLKIFKKLYHRWIHMF</variation>
    <location>
        <begin position="195"/>
        <end position="210"/>
    </location>
</feature>
<feature type="splice variant" id="VSP_007966" description="In isoform 2." evidence="5">
    <location>
        <begin position="211"/>
        <end position="835"/>
    </location>
</feature>
<feature type="splice variant" id="VSP_007967" description="In isoform 3." evidence="6">
    <original>IVSSLLPPYRHSAHN</original>
    <variation>SGHCPQ</variation>
    <location>
        <begin position="821"/>
        <end position="835"/>
    </location>
</feature>
<feature type="splice variant" id="VSP_007968" description="In isoform 4." evidence="6">
    <original>IVSSLLPPYRHSAHN</original>
    <variation>VSGEAPDTVPTIDTYLLHSQGPQIPTIRVSSGTQRKRYACSYCHSVVQCTGFS</variation>
    <location>
        <begin position="821"/>
        <end position="835"/>
    </location>
</feature>
<feature type="sequence conflict" description="In Ref. 4; CAC81709." evidence="6" ref="4">
    <original>R</original>
    <variation>K</variation>
    <location>
        <position position="70"/>
    </location>
</feature>
<feature type="sequence conflict" description="In Ref. 1; BAC34733." evidence="6" ref="1">
    <original>D</original>
    <variation>N</variation>
    <location>
        <position position="86"/>
    </location>
</feature>
<feature type="sequence conflict" description="In Ref. 1; BAC38518." evidence="6" ref="1">
    <original>R</original>
    <variation>Q</variation>
    <location>
        <position position="90"/>
    </location>
</feature>
<feature type="sequence conflict" description="In Ref. 1; BAC30057." evidence="6" ref="1">
    <original>E</original>
    <variation>K</variation>
    <location>
        <position position="111"/>
    </location>
</feature>
<feature type="sequence conflict" description="In Ref. 1; BAC32557." evidence="6" ref="1">
    <original>H</original>
    <variation>D</variation>
    <location>
        <position position="312"/>
    </location>
</feature>
<feature type="sequence conflict" description="In Ref. 3; AAB94807." evidence="6" ref="3">
    <original>E</original>
    <variation>K</variation>
    <location>
        <position position="470"/>
    </location>
</feature>
<feature type="sequence conflict" description="In Ref. 1; BAC32557." evidence="6" ref="1">
    <original>I</original>
    <variation>V</variation>
    <location>
        <position position="632"/>
    </location>
</feature>
<feature type="sequence conflict" description="In Ref. 4; CAC81711." evidence="6" ref="4">
    <original>D</original>
    <variation>G</variation>
    <location>
        <position position="796"/>
    </location>
</feature>
<feature type="helix" evidence="7">
    <location>
        <begin position="711"/>
        <end position="738"/>
    </location>
</feature>
<feature type="helix" evidence="7">
    <location>
        <begin position="741"/>
        <end position="802"/>
    </location>
</feature>
<feature type="helix" evidence="7">
    <location>
        <begin position="804"/>
        <end position="807"/>
    </location>
</feature>
<keyword id="KW-0002">3D-structure</keyword>
<keyword id="KW-0025">Alternative splicing</keyword>
<keyword id="KW-0175">Coiled coil</keyword>
<keyword id="KW-0333">Golgi apparatus</keyword>
<keyword id="KW-1185">Reference proteome</keyword>
<proteinExistence type="evidence at protein level"/>